<gene>
    <name type="primary">RIC11</name>
    <name type="ordered locus">At4g21745</name>
    <name type="ORF">F17L22</name>
</gene>
<accession>Q0WL69</accession>
<organism>
    <name type="scientific">Arabidopsis thaliana</name>
    <name type="common">Mouse-ear cress</name>
    <dbReference type="NCBI Taxonomy" id="3702"/>
    <lineage>
        <taxon>Eukaryota</taxon>
        <taxon>Viridiplantae</taxon>
        <taxon>Streptophyta</taxon>
        <taxon>Embryophyta</taxon>
        <taxon>Tracheophyta</taxon>
        <taxon>Spermatophyta</taxon>
        <taxon>Magnoliopsida</taxon>
        <taxon>eudicotyledons</taxon>
        <taxon>Gunneridae</taxon>
        <taxon>Pentapetalae</taxon>
        <taxon>rosids</taxon>
        <taxon>malvids</taxon>
        <taxon>Brassicales</taxon>
        <taxon>Brassicaceae</taxon>
        <taxon>Camelineae</taxon>
        <taxon>Arabidopsis</taxon>
    </lineage>
</organism>
<reference key="1">
    <citation type="journal article" date="1999" name="Nature">
        <title>Sequence and analysis of chromosome 4 of the plant Arabidopsis thaliana.</title>
        <authorList>
            <person name="Mayer K.F.X."/>
            <person name="Schueller C."/>
            <person name="Wambutt R."/>
            <person name="Murphy G."/>
            <person name="Volckaert G."/>
            <person name="Pohl T."/>
            <person name="Duesterhoeft A."/>
            <person name="Stiekema W."/>
            <person name="Entian K.-D."/>
            <person name="Terryn N."/>
            <person name="Harris B."/>
            <person name="Ansorge W."/>
            <person name="Brandt P."/>
            <person name="Grivell L.A."/>
            <person name="Rieger M."/>
            <person name="Weichselgartner M."/>
            <person name="de Simone V."/>
            <person name="Obermaier B."/>
            <person name="Mache R."/>
            <person name="Mueller M."/>
            <person name="Kreis M."/>
            <person name="Delseny M."/>
            <person name="Puigdomenech P."/>
            <person name="Watson M."/>
            <person name="Schmidtheini T."/>
            <person name="Reichert B."/>
            <person name="Portetelle D."/>
            <person name="Perez-Alonso M."/>
            <person name="Boutry M."/>
            <person name="Bancroft I."/>
            <person name="Vos P."/>
            <person name="Hoheisel J."/>
            <person name="Zimmermann W."/>
            <person name="Wedler H."/>
            <person name="Ridley P."/>
            <person name="Langham S.-A."/>
            <person name="McCullagh B."/>
            <person name="Bilham L."/>
            <person name="Robben J."/>
            <person name="van der Schueren J."/>
            <person name="Grymonprez B."/>
            <person name="Chuang Y.-J."/>
            <person name="Vandenbussche F."/>
            <person name="Braeken M."/>
            <person name="Weltjens I."/>
            <person name="Voet M."/>
            <person name="Bastiaens I."/>
            <person name="Aert R."/>
            <person name="Defoor E."/>
            <person name="Weitzenegger T."/>
            <person name="Bothe G."/>
            <person name="Ramsperger U."/>
            <person name="Hilbert H."/>
            <person name="Braun M."/>
            <person name="Holzer E."/>
            <person name="Brandt A."/>
            <person name="Peters S."/>
            <person name="van Staveren M."/>
            <person name="Dirkse W."/>
            <person name="Mooijman P."/>
            <person name="Klein Lankhorst R."/>
            <person name="Rose M."/>
            <person name="Hauf J."/>
            <person name="Koetter P."/>
            <person name="Berneiser S."/>
            <person name="Hempel S."/>
            <person name="Feldpausch M."/>
            <person name="Lamberth S."/>
            <person name="Van den Daele H."/>
            <person name="De Keyser A."/>
            <person name="Buysshaert C."/>
            <person name="Gielen J."/>
            <person name="Villarroel R."/>
            <person name="De Clercq R."/>
            <person name="van Montagu M."/>
            <person name="Rogers J."/>
            <person name="Cronin A."/>
            <person name="Quail M.A."/>
            <person name="Bray-Allen S."/>
            <person name="Clark L."/>
            <person name="Doggett J."/>
            <person name="Hall S."/>
            <person name="Kay M."/>
            <person name="Lennard N."/>
            <person name="McLay K."/>
            <person name="Mayes R."/>
            <person name="Pettett A."/>
            <person name="Rajandream M.A."/>
            <person name="Lyne M."/>
            <person name="Benes V."/>
            <person name="Rechmann S."/>
            <person name="Borkova D."/>
            <person name="Bloecker H."/>
            <person name="Scharfe M."/>
            <person name="Grimm M."/>
            <person name="Loehnert T.-H."/>
            <person name="Dose S."/>
            <person name="de Haan M."/>
            <person name="Maarse A.C."/>
            <person name="Schaefer M."/>
            <person name="Mueller-Auer S."/>
            <person name="Gabel C."/>
            <person name="Fuchs M."/>
            <person name="Fartmann B."/>
            <person name="Granderath K."/>
            <person name="Dauner D."/>
            <person name="Herzl A."/>
            <person name="Neumann S."/>
            <person name="Argiriou A."/>
            <person name="Vitale D."/>
            <person name="Liguori R."/>
            <person name="Piravandi E."/>
            <person name="Massenet O."/>
            <person name="Quigley F."/>
            <person name="Clabauld G."/>
            <person name="Muendlein A."/>
            <person name="Felber R."/>
            <person name="Schnabl S."/>
            <person name="Hiller R."/>
            <person name="Schmidt W."/>
            <person name="Lecharny A."/>
            <person name="Aubourg S."/>
            <person name="Chefdor F."/>
            <person name="Cooke R."/>
            <person name="Berger C."/>
            <person name="Monfort A."/>
            <person name="Casacuberta E."/>
            <person name="Gibbons T."/>
            <person name="Weber N."/>
            <person name="Vandenbol M."/>
            <person name="Bargues M."/>
            <person name="Terol J."/>
            <person name="Torres A."/>
            <person name="Perez-Perez A."/>
            <person name="Purnelle B."/>
            <person name="Bent E."/>
            <person name="Johnson S."/>
            <person name="Tacon D."/>
            <person name="Jesse T."/>
            <person name="Heijnen L."/>
            <person name="Schwarz S."/>
            <person name="Scholler P."/>
            <person name="Heber S."/>
            <person name="Francs P."/>
            <person name="Bielke C."/>
            <person name="Frishman D."/>
            <person name="Haase D."/>
            <person name="Lemcke K."/>
            <person name="Mewes H.-W."/>
            <person name="Stocker S."/>
            <person name="Zaccaria P."/>
            <person name="Bevan M."/>
            <person name="Wilson R.K."/>
            <person name="de la Bastide M."/>
            <person name="Habermann K."/>
            <person name="Parnell L."/>
            <person name="Dedhia N."/>
            <person name="Gnoj L."/>
            <person name="Schutz K."/>
            <person name="Huang E."/>
            <person name="Spiegel L."/>
            <person name="Sekhon M."/>
            <person name="Murray J."/>
            <person name="Sheet P."/>
            <person name="Cordes M."/>
            <person name="Abu-Threideh J."/>
            <person name="Stoneking T."/>
            <person name="Kalicki J."/>
            <person name="Graves T."/>
            <person name="Harmon G."/>
            <person name="Edwards J."/>
            <person name="Latreille P."/>
            <person name="Courtney L."/>
            <person name="Cloud J."/>
            <person name="Abbott A."/>
            <person name="Scott K."/>
            <person name="Johnson D."/>
            <person name="Minx P."/>
            <person name="Bentley D."/>
            <person name="Fulton B."/>
            <person name="Miller N."/>
            <person name="Greco T."/>
            <person name="Kemp K."/>
            <person name="Kramer J."/>
            <person name="Fulton L."/>
            <person name="Mardis E."/>
            <person name="Dante M."/>
            <person name="Pepin K."/>
            <person name="Hillier L.W."/>
            <person name="Nelson J."/>
            <person name="Spieth J."/>
            <person name="Ryan E."/>
            <person name="Andrews S."/>
            <person name="Geisel C."/>
            <person name="Layman D."/>
            <person name="Du H."/>
            <person name="Ali J."/>
            <person name="Berghoff A."/>
            <person name="Jones K."/>
            <person name="Drone K."/>
            <person name="Cotton M."/>
            <person name="Joshu C."/>
            <person name="Antonoiu B."/>
            <person name="Zidanic M."/>
            <person name="Strong C."/>
            <person name="Sun H."/>
            <person name="Lamar B."/>
            <person name="Yordan C."/>
            <person name="Ma P."/>
            <person name="Zhong J."/>
            <person name="Preston R."/>
            <person name="Vil D."/>
            <person name="Shekher M."/>
            <person name="Matero A."/>
            <person name="Shah R."/>
            <person name="Swaby I.K."/>
            <person name="O'Shaughnessy A."/>
            <person name="Rodriguez M."/>
            <person name="Hoffman J."/>
            <person name="Till S."/>
            <person name="Granat S."/>
            <person name="Shohdy N."/>
            <person name="Hasegawa A."/>
            <person name="Hameed A."/>
            <person name="Lodhi M."/>
            <person name="Johnson A."/>
            <person name="Chen E."/>
            <person name="Marra M.A."/>
            <person name="Martienssen R."/>
            <person name="McCombie W.R."/>
        </authorList>
    </citation>
    <scope>NUCLEOTIDE SEQUENCE [LARGE SCALE GENOMIC DNA]</scope>
    <source>
        <strain>cv. Columbia</strain>
    </source>
</reference>
<reference key="2">
    <citation type="journal article" date="2017" name="Plant J.">
        <title>Araport11: a complete reannotation of the Arabidopsis thaliana reference genome.</title>
        <authorList>
            <person name="Cheng C.Y."/>
            <person name="Krishnakumar V."/>
            <person name="Chan A.P."/>
            <person name="Thibaud-Nissen F."/>
            <person name="Schobel S."/>
            <person name="Town C.D."/>
        </authorList>
    </citation>
    <scope>GENOME REANNOTATION</scope>
    <source>
        <strain>cv. Columbia</strain>
    </source>
</reference>
<reference key="3">
    <citation type="submission" date="2006-07" db="EMBL/GenBank/DDBJ databases">
        <title>Large-scale analysis of RIKEN Arabidopsis full-length (RAFL) cDNAs.</title>
        <authorList>
            <person name="Totoki Y."/>
            <person name="Seki M."/>
            <person name="Ishida J."/>
            <person name="Nakajima M."/>
            <person name="Enju A."/>
            <person name="Kamiya A."/>
            <person name="Narusaka M."/>
            <person name="Shin-i T."/>
            <person name="Nakagawa M."/>
            <person name="Sakamoto N."/>
            <person name="Oishi K."/>
            <person name="Kohara Y."/>
            <person name="Kobayashi M."/>
            <person name="Toyoda A."/>
            <person name="Sakaki Y."/>
            <person name="Sakurai T."/>
            <person name="Iida K."/>
            <person name="Akiyama K."/>
            <person name="Satou M."/>
            <person name="Toyoda T."/>
            <person name="Konagaya A."/>
            <person name="Carninci P."/>
            <person name="Kawai J."/>
            <person name="Hayashizaki Y."/>
            <person name="Shinozaki K."/>
        </authorList>
    </citation>
    <scope>NUCLEOTIDE SEQUENCE [LARGE SCALE MRNA]</scope>
    <source>
        <strain>cv. Columbia</strain>
    </source>
</reference>
<reference key="4">
    <citation type="journal article" date="2001" name="Plant Cell">
        <title>A genome-wide analysis of Arabidopsis Rop-interactive CRIB motif-containing proteins that act as Rop GTPase targets.</title>
        <authorList>
            <person name="Wu G."/>
            <person name="Gu Y."/>
            <person name="Li S."/>
            <person name="Yang Z."/>
        </authorList>
    </citation>
    <scope>GENE FAMILY</scope>
    <scope>NOMENCLATURE</scope>
</reference>
<dbReference type="EMBL" id="AL035527">
    <property type="status" value="NOT_ANNOTATED_CDS"/>
    <property type="molecule type" value="Genomic_DNA"/>
</dbReference>
<dbReference type="EMBL" id="CP002687">
    <property type="protein sequence ID" value="AEE84497.1"/>
    <property type="molecule type" value="Genomic_DNA"/>
</dbReference>
<dbReference type="EMBL" id="AK230339">
    <property type="protein sequence ID" value="BAF02138.1"/>
    <property type="molecule type" value="mRNA"/>
</dbReference>
<dbReference type="RefSeq" id="NP_001078421.1">
    <property type="nucleotide sequence ID" value="NM_001084952.2"/>
</dbReference>
<dbReference type="FunCoup" id="Q0WL69">
    <property type="interactions" value="146"/>
</dbReference>
<dbReference type="STRING" id="3702.Q0WL69"/>
<dbReference type="iPTMnet" id="Q0WL69"/>
<dbReference type="PaxDb" id="3702-AT4G21745.1"/>
<dbReference type="EnsemblPlants" id="AT4G21745.1">
    <property type="protein sequence ID" value="AT4G21745.1"/>
    <property type="gene ID" value="AT4G21745"/>
</dbReference>
<dbReference type="GeneID" id="5008153"/>
<dbReference type="Gramene" id="AT4G21745.1">
    <property type="protein sequence ID" value="AT4G21745.1"/>
    <property type="gene ID" value="AT4G21745"/>
</dbReference>
<dbReference type="KEGG" id="ath:AT4G21745"/>
<dbReference type="Araport" id="AT4G21745"/>
<dbReference type="TAIR" id="AT4G21745"/>
<dbReference type="eggNOG" id="ENOG502S1IY">
    <property type="taxonomic scope" value="Eukaryota"/>
</dbReference>
<dbReference type="HOGENOM" id="CLU_076219_2_0_1"/>
<dbReference type="InParanoid" id="Q0WL69"/>
<dbReference type="OMA" id="WSSQGCG"/>
<dbReference type="OrthoDB" id="4206278at2759"/>
<dbReference type="PhylomeDB" id="Q0WL69"/>
<dbReference type="PRO" id="PR:Q0WL69"/>
<dbReference type="Proteomes" id="UP000006548">
    <property type="component" value="Chromosome 4"/>
</dbReference>
<dbReference type="ExpressionAtlas" id="Q0WL69">
    <property type="expression patterns" value="baseline and differential"/>
</dbReference>
<dbReference type="CDD" id="cd00132">
    <property type="entry name" value="CRIB"/>
    <property type="match status" value="1"/>
</dbReference>
<dbReference type="InterPro" id="IPR000095">
    <property type="entry name" value="CRIB_dom"/>
</dbReference>
<dbReference type="PANTHER" id="PTHR46325:SF33">
    <property type="entry name" value="CRIB DOMAIN-CONTAINING PROTEIN RIC11"/>
    <property type="match status" value="1"/>
</dbReference>
<dbReference type="PANTHER" id="PTHR46325">
    <property type="entry name" value="CRIB DOMAIN-CONTAINING PROTEIN RIC8"/>
    <property type="match status" value="1"/>
</dbReference>
<dbReference type="PROSITE" id="PS50108">
    <property type="entry name" value="CRIB"/>
    <property type="match status" value="1"/>
</dbReference>
<keyword id="KW-1185">Reference proteome</keyword>
<feature type="chain" id="PRO_0000422734" description="CRIB domain-containing protein RIC11">
    <location>
        <begin position="1"/>
        <end position="156"/>
    </location>
</feature>
<feature type="domain" description="CRIB" evidence="2">
    <location>
        <begin position="26"/>
        <end position="39"/>
    </location>
</feature>
<feature type="region of interest" description="Disordered" evidence="3">
    <location>
        <begin position="87"/>
        <end position="156"/>
    </location>
</feature>
<feature type="compositionally biased region" description="Basic residues" evidence="3">
    <location>
        <begin position="109"/>
        <end position="120"/>
    </location>
</feature>
<feature type="compositionally biased region" description="Low complexity" evidence="3">
    <location>
        <begin position="121"/>
        <end position="142"/>
    </location>
</feature>
<comment type="function">
    <text evidence="1">Functions as a downstream effector of Rho-related GTP binding proteins of the 'Rho of Plants' (ROPs) family. Participates in the propagation of ROP GTPase signals in specific cellular responses (By similarity).</text>
</comment>
<proteinExistence type="evidence at transcript level"/>
<protein>
    <recommendedName>
        <fullName>CRIB domain-containing protein RIC11</fullName>
    </recommendedName>
    <alternativeName>
        <fullName>ROP-interactive CRIB motif-containing protein 11</fullName>
    </alternativeName>
    <alternativeName>
        <fullName>Target of ROP protein RIC11</fullName>
    </alternativeName>
</protein>
<evidence type="ECO:0000250" key="1"/>
<evidence type="ECO:0000255" key="2">
    <source>
        <dbReference type="PROSITE-ProRule" id="PRU00057"/>
    </source>
</evidence>
<evidence type="ECO:0000256" key="3">
    <source>
        <dbReference type="SAM" id="MobiDB-lite"/>
    </source>
</evidence>
<sequence>MAMKMKGIYKSFKSIMFVGKERDLEIGHPTEVKHVAHIGWGSSGSDPGWMSDFKAGAEFLSPRTSSFSHTRHSDSFFTTSDSTEFDQDQLNISDRIRDVPPIPVGLSKIHTKSKNRRKKPSSTSSPRSRPSPKSSRSMGLSKSSHKSMVSRLNSNA</sequence>
<name>RIC11_ARATH</name>